<reference key="1">
    <citation type="journal article" date="2003" name="Lancet">
        <title>Genome sequence of Vibrio parahaemolyticus: a pathogenic mechanism distinct from that of V. cholerae.</title>
        <authorList>
            <person name="Makino K."/>
            <person name="Oshima K."/>
            <person name="Kurokawa K."/>
            <person name="Yokoyama K."/>
            <person name="Uda T."/>
            <person name="Tagomori K."/>
            <person name="Iijima Y."/>
            <person name="Najima M."/>
            <person name="Nakano M."/>
            <person name="Yamashita A."/>
            <person name="Kubota Y."/>
            <person name="Kimura S."/>
            <person name="Yasunaga T."/>
            <person name="Honda T."/>
            <person name="Shinagawa H."/>
            <person name="Hattori M."/>
            <person name="Iida T."/>
        </authorList>
    </citation>
    <scope>NUCLEOTIDE SEQUENCE [LARGE SCALE GENOMIC DNA]</scope>
    <source>
        <strain>RIMD 2210633</strain>
    </source>
</reference>
<protein>
    <recommendedName>
        <fullName evidence="1">DNA-binding protein Fis</fullName>
    </recommendedName>
</protein>
<gene>
    <name evidence="1" type="primary">fis</name>
    <name type="ordered locus">VP2885</name>
</gene>
<feature type="chain" id="PRO_0000203900" description="DNA-binding protein Fis">
    <location>
        <begin position="1"/>
        <end position="98"/>
    </location>
</feature>
<feature type="DNA-binding region" description="H-T-H motif" evidence="1">
    <location>
        <begin position="74"/>
        <end position="93"/>
    </location>
</feature>
<accession>P64128</accession>
<accession>Q9KV67</accession>
<comment type="function">
    <text evidence="1">Activates ribosomal RNA transcription. Plays a direct role in upstream activation of rRNA promoters.</text>
</comment>
<comment type="subunit">
    <text evidence="1">Homodimer.</text>
</comment>
<comment type="similarity">
    <text evidence="1">Belongs to the transcriptional regulatory Fis family.</text>
</comment>
<sequence length="98" mass="11112">MFEQNLTSEALTVTTVTSQDQITQKPLRDSVKASLKNYLAQLNGQEVTELYELVLAEVEQPLLDTIMQYTRGNQTRAATMMGINRGTLRKKLKKYGMN</sequence>
<evidence type="ECO:0000255" key="1">
    <source>
        <dbReference type="HAMAP-Rule" id="MF_00166"/>
    </source>
</evidence>
<dbReference type="EMBL" id="BA000031">
    <property type="protein sequence ID" value="BAC61148.1"/>
    <property type="molecule type" value="Genomic_DNA"/>
</dbReference>
<dbReference type="RefSeq" id="NP_799264.1">
    <property type="nucleotide sequence ID" value="NC_004603.1"/>
</dbReference>
<dbReference type="RefSeq" id="WP_000462885.1">
    <property type="nucleotide sequence ID" value="NC_004603.1"/>
</dbReference>
<dbReference type="SMR" id="P64128"/>
<dbReference type="GeneID" id="97171130"/>
<dbReference type="KEGG" id="vpa:VP2885"/>
<dbReference type="PATRIC" id="fig|223926.6.peg.2775"/>
<dbReference type="eggNOG" id="COG2901">
    <property type="taxonomic scope" value="Bacteria"/>
</dbReference>
<dbReference type="HOGENOM" id="CLU_158040_3_0_6"/>
<dbReference type="PRO" id="PR:P64128"/>
<dbReference type="Proteomes" id="UP000002493">
    <property type="component" value="Chromosome 1"/>
</dbReference>
<dbReference type="GO" id="GO:0003700">
    <property type="term" value="F:DNA-binding transcription factor activity"/>
    <property type="evidence" value="ECO:0007669"/>
    <property type="project" value="UniProtKB-UniRule"/>
</dbReference>
<dbReference type="GO" id="GO:0043565">
    <property type="term" value="F:sequence-specific DNA binding"/>
    <property type="evidence" value="ECO:0007669"/>
    <property type="project" value="InterPro"/>
</dbReference>
<dbReference type="FunFam" id="1.10.10.60:FF:000006">
    <property type="entry name" value="DNA-binding protein Fis"/>
    <property type="match status" value="1"/>
</dbReference>
<dbReference type="Gene3D" id="1.10.10.60">
    <property type="entry name" value="Homeodomain-like"/>
    <property type="match status" value="1"/>
</dbReference>
<dbReference type="HAMAP" id="MF_00166">
    <property type="entry name" value="DNA_binding_Fis"/>
    <property type="match status" value="1"/>
</dbReference>
<dbReference type="InterPro" id="IPR005412">
    <property type="entry name" value="Fis_DNA-bd"/>
</dbReference>
<dbReference type="InterPro" id="IPR009057">
    <property type="entry name" value="Homeodomain-like_sf"/>
</dbReference>
<dbReference type="InterPro" id="IPR002197">
    <property type="entry name" value="HTH_Fis"/>
</dbReference>
<dbReference type="InterPro" id="IPR050207">
    <property type="entry name" value="Trans_regulatory_Fis"/>
</dbReference>
<dbReference type="NCBIfam" id="NF001659">
    <property type="entry name" value="PRK00430.1"/>
    <property type="match status" value="1"/>
</dbReference>
<dbReference type="PANTHER" id="PTHR47918">
    <property type="entry name" value="DNA-BINDING PROTEIN FIS"/>
    <property type="match status" value="1"/>
</dbReference>
<dbReference type="PANTHER" id="PTHR47918:SF1">
    <property type="entry name" value="DNA-BINDING PROTEIN FIS"/>
    <property type="match status" value="1"/>
</dbReference>
<dbReference type="Pfam" id="PF02954">
    <property type="entry name" value="HTH_8"/>
    <property type="match status" value="1"/>
</dbReference>
<dbReference type="PIRSF" id="PIRSF002097">
    <property type="entry name" value="DNA-binding_Fis"/>
    <property type="match status" value="1"/>
</dbReference>
<dbReference type="PRINTS" id="PR01591">
    <property type="entry name" value="DNABINDNGFIS"/>
</dbReference>
<dbReference type="PRINTS" id="PR01590">
    <property type="entry name" value="HTHFIS"/>
</dbReference>
<dbReference type="SUPFAM" id="SSF46689">
    <property type="entry name" value="Homeodomain-like"/>
    <property type="match status" value="1"/>
</dbReference>
<organism>
    <name type="scientific">Vibrio parahaemolyticus serotype O3:K6 (strain RIMD 2210633)</name>
    <dbReference type="NCBI Taxonomy" id="223926"/>
    <lineage>
        <taxon>Bacteria</taxon>
        <taxon>Pseudomonadati</taxon>
        <taxon>Pseudomonadota</taxon>
        <taxon>Gammaproteobacteria</taxon>
        <taxon>Vibrionales</taxon>
        <taxon>Vibrionaceae</taxon>
        <taxon>Vibrio</taxon>
    </lineage>
</organism>
<proteinExistence type="inferred from homology"/>
<name>FIS_VIBPA</name>
<keyword id="KW-0010">Activator</keyword>
<keyword id="KW-0238">DNA-binding</keyword>
<keyword id="KW-0804">Transcription</keyword>
<keyword id="KW-0805">Transcription regulation</keyword>